<gene>
    <name type="ordered locus">TP_0867</name>
</gene>
<sequence>MRWLCRLIGYRYGYAVCGGYRRQGGRCSAQLHAQYTRVSHCVLRIAWEVNGADYELFRLWI</sequence>
<organism>
    <name type="scientific">Treponema pallidum (strain Nichols)</name>
    <dbReference type="NCBI Taxonomy" id="243276"/>
    <lineage>
        <taxon>Bacteria</taxon>
        <taxon>Pseudomonadati</taxon>
        <taxon>Spirochaetota</taxon>
        <taxon>Spirochaetia</taxon>
        <taxon>Spirochaetales</taxon>
        <taxon>Treponemataceae</taxon>
        <taxon>Treponema</taxon>
    </lineage>
</organism>
<feature type="chain" id="PRO_0000202341" description="Uncharacterized protein TP_0867">
    <location>
        <begin position="1"/>
        <end position="61"/>
    </location>
</feature>
<name>Y867_TREPA</name>
<protein>
    <recommendedName>
        <fullName>Uncharacterized protein TP_0867</fullName>
    </recommendedName>
</protein>
<accession>O83838</accession>
<dbReference type="EMBL" id="AE000520">
    <property type="protein sequence ID" value="AAC65844.1"/>
    <property type="molecule type" value="Genomic_DNA"/>
</dbReference>
<dbReference type="PIR" id="A71270">
    <property type="entry name" value="A71270"/>
</dbReference>
<dbReference type="IntAct" id="O83838">
    <property type="interactions" value="1"/>
</dbReference>
<dbReference type="STRING" id="243276.TP_0867"/>
<dbReference type="EnsemblBacteria" id="AAC65844">
    <property type="protein sequence ID" value="AAC65844"/>
    <property type="gene ID" value="TP_0867"/>
</dbReference>
<dbReference type="KEGG" id="tpa:TP_0867"/>
<dbReference type="KEGG" id="tpw:TPANIC_0867"/>
<dbReference type="HOGENOM" id="CLU_3031120_0_0_12"/>
<dbReference type="Proteomes" id="UP000000811">
    <property type="component" value="Chromosome"/>
</dbReference>
<keyword id="KW-1185">Reference proteome</keyword>
<proteinExistence type="predicted"/>
<reference key="1">
    <citation type="journal article" date="1998" name="Science">
        <title>Complete genome sequence of Treponema pallidum, the syphilis spirochete.</title>
        <authorList>
            <person name="Fraser C.M."/>
            <person name="Norris S.J."/>
            <person name="Weinstock G.M."/>
            <person name="White O."/>
            <person name="Sutton G.G."/>
            <person name="Dodson R.J."/>
            <person name="Gwinn M.L."/>
            <person name="Hickey E.K."/>
            <person name="Clayton R.A."/>
            <person name="Ketchum K.A."/>
            <person name="Sodergren E."/>
            <person name="Hardham J.M."/>
            <person name="McLeod M.P."/>
            <person name="Salzberg S.L."/>
            <person name="Peterson J.D."/>
            <person name="Khalak H.G."/>
            <person name="Richardson D.L."/>
            <person name="Howell J.K."/>
            <person name="Chidambaram M."/>
            <person name="Utterback T.R."/>
            <person name="McDonald L.A."/>
            <person name="Artiach P."/>
            <person name="Bowman C."/>
            <person name="Cotton M.D."/>
            <person name="Fujii C."/>
            <person name="Garland S.A."/>
            <person name="Hatch B."/>
            <person name="Horst K."/>
            <person name="Roberts K.M."/>
            <person name="Sandusky M."/>
            <person name="Weidman J.F."/>
            <person name="Smith H.O."/>
            <person name="Venter J.C."/>
        </authorList>
    </citation>
    <scope>NUCLEOTIDE SEQUENCE [LARGE SCALE GENOMIC DNA]</scope>
    <source>
        <strain>Nichols</strain>
    </source>
</reference>